<organism>
    <name type="scientific">Bacillus velezensis (strain DSM 23117 / BGSC 10A6 / LMG 26770 / FZB42)</name>
    <name type="common">Bacillus amyloliquefaciens subsp. plantarum</name>
    <dbReference type="NCBI Taxonomy" id="326423"/>
    <lineage>
        <taxon>Bacteria</taxon>
        <taxon>Bacillati</taxon>
        <taxon>Bacillota</taxon>
        <taxon>Bacilli</taxon>
        <taxon>Bacillales</taxon>
        <taxon>Bacillaceae</taxon>
        <taxon>Bacillus</taxon>
        <taxon>Bacillus amyloliquefaciens group</taxon>
    </lineage>
</organism>
<name>PCP_BACVZ</name>
<reference key="1">
    <citation type="journal article" date="2007" name="Nat. Biotechnol.">
        <title>Comparative analysis of the complete genome sequence of the plant growth-promoting bacterium Bacillus amyloliquefaciens FZB42.</title>
        <authorList>
            <person name="Chen X.H."/>
            <person name="Koumoutsi A."/>
            <person name="Scholz R."/>
            <person name="Eisenreich A."/>
            <person name="Schneider K."/>
            <person name="Heinemeyer I."/>
            <person name="Morgenstern B."/>
            <person name="Voss B."/>
            <person name="Hess W.R."/>
            <person name="Reva O."/>
            <person name="Junge H."/>
            <person name="Voigt B."/>
            <person name="Jungblut P.R."/>
            <person name="Vater J."/>
            <person name="Suessmuth R."/>
            <person name="Liesegang H."/>
            <person name="Strittmatter A."/>
            <person name="Gottschalk G."/>
            <person name="Borriss R."/>
        </authorList>
    </citation>
    <scope>NUCLEOTIDE SEQUENCE [LARGE SCALE GENOMIC DNA]</scope>
    <source>
        <strain>DSM 23117 / BGSC 10A6 / LMG 26770 / FZB42</strain>
    </source>
</reference>
<sequence>MEKKVLLTGFDPFGGETVNPSWEAVKRLNGAAEGPASIVSEQVPTVFYKSLAVLREAIKKHQPDIIICVGQAGGRMQITPERVAINLNEARIPDNEGNQPVGENISQGGPAAYWTGLPIKRIVEEIKKEGIPAAVSYTAGTFVCNHLFYGLMDEITRHHPHIRGGFIHIPYIPEQTLQKSAPSLSLDLVTKALKIAAVTAAAHEDDIETGGGELH</sequence>
<accession>A7Z119</accession>
<keyword id="KW-0963">Cytoplasm</keyword>
<keyword id="KW-0378">Hydrolase</keyword>
<keyword id="KW-0645">Protease</keyword>
<keyword id="KW-0788">Thiol protease</keyword>
<evidence type="ECO:0000255" key="1">
    <source>
        <dbReference type="HAMAP-Rule" id="MF_00417"/>
    </source>
</evidence>
<gene>
    <name evidence="1" type="primary">pcp</name>
    <name type="ordered locus">RBAM_002960</name>
</gene>
<dbReference type="EC" id="3.4.19.3" evidence="1"/>
<dbReference type="EMBL" id="CP000560">
    <property type="protein sequence ID" value="ABS72695.1"/>
    <property type="molecule type" value="Genomic_DNA"/>
</dbReference>
<dbReference type="RefSeq" id="WP_011996270.1">
    <property type="nucleotide sequence ID" value="NC_009725.2"/>
</dbReference>
<dbReference type="SMR" id="A7Z119"/>
<dbReference type="MEROPS" id="C15.001"/>
<dbReference type="GeneID" id="93079434"/>
<dbReference type="KEGG" id="bay:RBAM_002960"/>
<dbReference type="HOGENOM" id="CLU_043960_4_0_9"/>
<dbReference type="Proteomes" id="UP000001120">
    <property type="component" value="Chromosome"/>
</dbReference>
<dbReference type="GO" id="GO:0005829">
    <property type="term" value="C:cytosol"/>
    <property type="evidence" value="ECO:0007669"/>
    <property type="project" value="InterPro"/>
</dbReference>
<dbReference type="GO" id="GO:0016920">
    <property type="term" value="F:pyroglutamyl-peptidase activity"/>
    <property type="evidence" value="ECO:0007669"/>
    <property type="project" value="UniProtKB-UniRule"/>
</dbReference>
<dbReference type="GO" id="GO:0006508">
    <property type="term" value="P:proteolysis"/>
    <property type="evidence" value="ECO:0007669"/>
    <property type="project" value="UniProtKB-KW"/>
</dbReference>
<dbReference type="CDD" id="cd00501">
    <property type="entry name" value="Peptidase_C15"/>
    <property type="match status" value="1"/>
</dbReference>
<dbReference type="FunFam" id="3.40.630.20:FF:000001">
    <property type="entry name" value="Pyrrolidone-carboxylate peptidase"/>
    <property type="match status" value="1"/>
</dbReference>
<dbReference type="Gene3D" id="3.40.630.20">
    <property type="entry name" value="Peptidase C15, pyroglutamyl peptidase I-like"/>
    <property type="match status" value="1"/>
</dbReference>
<dbReference type="HAMAP" id="MF_00417">
    <property type="entry name" value="Pyrrolid_peptidase"/>
    <property type="match status" value="1"/>
</dbReference>
<dbReference type="InterPro" id="IPR000816">
    <property type="entry name" value="Peptidase_C15"/>
</dbReference>
<dbReference type="InterPro" id="IPR016125">
    <property type="entry name" value="Peptidase_C15-like"/>
</dbReference>
<dbReference type="InterPro" id="IPR036440">
    <property type="entry name" value="Peptidase_C15-like_sf"/>
</dbReference>
<dbReference type="InterPro" id="IPR029762">
    <property type="entry name" value="PGP-I_bact-type"/>
</dbReference>
<dbReference type="InterPro" id="IPR033694">
    <property type="entry name" value="PGPEP1_Cys_AS"/>
</dbReference>
<dbReference type="InterPro" id="IPR033693">
    <property type="entry name" value="PGPEP1_Glu_AS"/>
</dbReference>
<dbReference type="NCBIfam" id="NF009676">
    <property type="entry name" value="PRK13197.1"/>
    <property type="match status" value="1"/>
</dbReference>
<dbReference type="NCBIfam" id="TIGR00504">
    <property type="entry name" value="pyro_pdase"/>
    <property type="match status" value="1"/>
</dbReference>
<dbReference type="PANTHER" id="PTHR23402">
    <property type="entry name" value="PROTEASE FAMILY C15 PYROGLUTAMYL-PEPTIDASE I-RELATED"/>
    <property type="match status" value="1"/>
</dbReference>
<dbReference type="PANTHER" id="PTHR23402:SF1">
    <property type="entry name" value="PYROGLUTAMYL-PEPTIDASE I"/>
    <property type="match status" value="1"/>
</dbReference>
<dbReference type="Pfam" id="PF01470">
    <property type="entry name" value="Peptidase_C15"/>
    <property type="match status" value="1"/>
</dbReference>
<dbReference type="PIRSF" id="PIRSF015592">
    <property type="entry name" value="Prld-crbxl_pptds"/>
    <property type="match status" value="1"/>
</dbReference>
<dbReference type="PRINTS" id="PR00706">
    <property type="entry name" value="PYROGLUPTASE"/>
</dbReference>
<dbReference type="SUPFAM" id="SSF53182">
    <property type="entry name" value="Pyrrolidone carboxyl peptidase (pyroglutamate aminopeptidase)"/>
    <property type="match status" value="1"/>
</dbReference>
<dbReference type="PROSITE" id="PS01334">
    <property type="entry name" value="PYRASE_CYS"/>
    <property type="match status" value="1"/>
</dbReference>
<dbReference type="PROSITE" id="PS01333">
    <property type="entry name" value="PYRASE_GLU"/>
    <property type="match status" value="1"/>
</dbReference>
<comment type="function">
    <text evidence="1">Removes 5-oxoproline from various penultimate amino acid residues except L-proline.</text>
</comment>
<comment type="catalytic activity">
    <reaction evidence="1">
        <text>Release of an N-terminal pyroglutamyl group from a polypeptide, the second amino acid generally not being Pro.</text>
        <dbReference type="EC" id="3.4.19.3"/>
    </reaction>
</comment>
<comment type="subunit">
    <text evidence="1">Homotetramer.</text>
</comment>
<comment type="subcellular location">
    <subcellularLocation>
        <location evidence="1">Cytoplasm</location>
    </subcellularLocation>
</comment>
<comment type="similarity">
    <text evidence="1">Belongs to the peptidase C15 family.</text>
</comment>
<proteinExistence type="inferred from homology"/>
<protein>
    <recommendedName>
        <fullName evidence="1">Pyrrolidone-carboxylate peptidase</fullName>
        <ecNumber evidence="1">3.4.19.3</ecNumber>
    </recommendedName>
    <alternativeName>
        <fullName evidence="1">5-oxoprolyl-peptidase</fullName>
    </alternativeName>
    <alternativeName>
        <fullName evidence="1">Pyroglutamyl-peptidase I</fullName>
        <shortName evidence="1">PGP-I</shortName>
        <shortName evidence="1">Pyrase</shortName>
    </alternativeName>
</protein>
<feature type="chain" id="PRO_1000050121" description="Pyrrolidone-carboxylate peptidase">
    <location>
        <begin position="1"/>
        <end position="215"/>
    </location>
</feature>
<feature type="active site" evidence="1">
    <location>
        <position position="81"/>
    </location>
</feature>
<feature type="active site" evidence="1">
    <location>
        <position position="144"/>
    </location>
</feature>
<feature type="active site" evidence="1">
    <location>
        <position position="168"/>
    </location>
</feature>